<protein>
    <recommendedName>
        <fullName evidence="1">Ribose-5-phosphate isomerase A</fullName>
        <ecNumber evidence="1">5.3.1.6</ecNumber>
    </recommendedName>
    <alternativeName>
        <fullName evidence="1">Phosphoriboisomerase A</fullName>
        <shortName evidence="1">PRI</shortName>
    </alternativeName>
</protein>
<proteinExistence type="inferred from homology"/>
<evidence type="ECO:0000255" key="1">
    <source>
        <dbReference type="HAMAP-Rule" id="MF_00170"/>
    </source>
</evidence>
<comment type="function">
    <text evidence="1">Catalyzes the reversible conversion of ribose-5-phosphate to ribulose 5-phosphate.</text>
</comment>
<comment type="catalytic activity">
    <reaction evidence="1">
        <text>aldehydo-D-ribose 5-phosphate = D-ribulose 5-phosphate</text>
        <dbReference type="Rhea" id="RHEA:14657"/>
        <dbReference type="ChEBI" id="CHEBI:58121"/>
        <dbReference type="ChEBI" id="CHEBI:58273"/>
        <dbReference type="EC" id="5.3.1.6"/>
    </reaction>
</comment>
<comment type="pathway">
    <text evidence="1">Carbohydrate degradation; pentose phosphate pathway; D-ribose 5-phosphate from D-ribulose 5-phosphate (non-oxidative stage): step 1/1.</text>
</comment>
<comment type="subunit">
    <text evidence="1">Homodimer.</text>
</comment>
<comment type="similarity">
    <text evidence="1">Belongs to the ribose 5-phosphate isomerase family.</text>
</comment>
<gene>
    <name evidence="1" type="primary">rpiA</name>
    <name type="ordered locus">Rpal_2194</name>
</gene>
<dbReference type="EC" id="5.3.1.6" evidence="1"/>
<dbReference type="EMBL" id="CP001096">
    <property type="protein sequence ID" value="ACF00715.1"/>
    <property type="molecule type" value="Genomic_DNA"/>
</dbReference>
<dbReference type="RefSeq" id="WP_011157536.1">
    <property type="nucleotide sequence ID" value="NC_011004.1"/>
</dbReference>
<dbReference type="SMR" id="B3QCR0"/>
<dbReference type="GeneID" id="66893025"/>
<dbReference type="KEGG" id="rpt:Rpal_2194"/>
<dbReference type="HOGENOM" id="CLU_056590_1_0_5"/>
<dbReference type="OrthoDB" id="5870696at2"/>
<dbReference type="UniPathway" id="UPA00115">
    <property type="reaction ID" value="UER00412"/>
</dbReference>
<dbReference type="Proteomes" id="UP000001725">
    <property type="component" value="Chromosome"/>
</dbReference>
<dbReference type="GO" id="GO:0004751">
    <property type="term" value="F:ribose-5-phosphate isomerase activity"/>
    <property type="evidence" value="ECO:0007669"/>
    <property type="project" value="UniProtKB-UniRule"/>
</dbReference>
<dbReference type="GO" id="GO:0009052">
    <property type="term" value="P:pentose-phosphate shunt, non-oxidative branch"/>
    <property type="evidence" value="ECO:0007669"/>
    <property type="project" value="UniProtKB-UniRule"/>
</dbReference>
<dbReference type="CDD" id="cd01398">
    <property type="entry name" value="RPI_A"/>
    <property type="match status" value="1"/>
</dbReference>
<dbReference type="FunFam" id="3.40.50.1360:FF:000001">
    <property type="entry name" value="Ribose-5-phosphate isomerase A"/>
    <property type="match status" value="1"/>
</dbReference>
<dbReference type="Gene3D" id="3.30.70.260">
    <property type="match status" value="1"/>
</dbReference>
<dbReference type="Gene3D" id="3.40.50.1360">
    <property type="match status" value="1"/>
</dbReference>
<dbReference type="HAMAP" id="MF_00170">
    <property type="entry name" value="Rib_5P_isom_A"/>
    <property type="match status" value="1"/>
</dbReference>
<dbReference type="InterPro" id="IPR037171">
    <property type="entry name" value="NagB/RpiA_transferase-like"/>
</dbReference>
<dbReference type="InterPro" id="IPR050262">
    <property type="entry name" value="Ribose-5P_isomerase"/>
</dbReference>
<dbReference type="InterPro" id="IPR020672">
    <property type="entry name" value="Ribose5P_isomerase_typA_subgr"/>
</dbReference>
<dbReference type="InterPro" id="IPR004788">
    <property type="entry name" value="Ribose5P_isomerase_type_A"/>
</dbReference>
<dbReference type="NCBIfam" id="NF001924">
    <property type="entry name" value="PRK00702.1"/>
    <property type="match status" value="1"/>
</dbReference>
<dbReference type="NCBIfam" id="TIGR00021">
    <property type="entry name" value="rpiA"/>
    <property type="match status" value="1"/>
</dbReference>
<dbReference type="PANTHER" id="PTHR43748">
    <property type="entry name" value="RIBOSE-5-PHOSPHATE ISOMERASE 3, CHLOROPLASTIC-RELATED"/>
    <property type="match status" value="1"/>
</dbReference>
<dbReference type="PANTHER" id="PTHR43748:SF3">
    <property type="entry name" value="RIBOSE-5-PHOSPHATE ISOMERASE 3, CHLOROPLASTIC-RELATED"/>
    <property type="match status" value="1"/>
</dbReference>
<dbReference type="Pfam" id="PF06026">
    <property type="entry name" value="Rib_5-P_isom_A"/>
    <property type="match status" value="1"/>
</dbReference>
<dbReference type="SUPFAM" id="SSF75445">
    <property type="entry name" value="D-ribose-5-phosphate isomerase (RpiA), lid domain"/>
    <property type="match status" value="1"/>
</dbReference>
<dbReference type="SUPFAM" id="SSF100950">
    <property type="entry name" value="NagB/RpiA/CoA transferase-like"/>
    <property type="match status" value="1"/>
</dbReference>
<organism>
    <name type="scientific">Rhodopseudomonas palustris (strain TIE-1)</name>
    <dbReference type="NCBI Taxonomy" id="395960"/>
    <lineage>
        <taxon>Bacteria</taxon>
        <taxon>Pseudomonadati</taxon>
        <taxon>Pseudomonadota</taxon>
        <taxon>Alphaproteobacteria</taxon>
        <taxon>Hyphomicrobiales</taxon>
        <taxon>Nitrobacteraceae</taxon>
        <taxon>Rhodopseudomonas</taxon>
    </lineage>
</organism>
<sequence length="232" mass="24676">MDKEELKRRAAARALEEVRGGMKLGLGTGSTAKHFVELLGERVRLGLEIIGVPTSEVTRADAERCGIRLTSLDEIDRLDITIDGADEVDHHLDLIKGGGGALLREKIVAAASDRMIVIADESKLVDTLGRFPLPIEVIPFGLGATRRALQNAFTAAGCDGELKLRPGKDGHAFVTDGGHWILDAQLGRIPDAPRLAQLLSVIPGVVEHGLFVGMASTVVLAGADGIRTIERA</sequence>
<accession>B3QCR0</accession>
<name>RPIA_RHOPT</name>
<keyword id="KW-0413">Isomerase</keyword>
<feature type="chain" id="PRO_1000097689" description="Ribose-5-phosphate isomerase A">
    <location>
        <begin position="1"/>
        <end position="232"/>
    </location>
</feature>
<feature type="active site" description="Proton acceptor" evidence="1">
    <location>
        <position position="105"/>
    </location>
</feature>
<feature type="binding site" evidence="1">
    <location>
        <begin position="28"/>
        <end position="31"/>
    </location>
    <ligand>
        <name>substrate</name>
    </ligand>
</feature>
<feature type="binding site" evidence="1">
    <location>
        <begin position="83"/>
        <end position="86"/>
    </location>
    <ligand>
        <name>substrate</name>
    </ligand>
</feature>
<feature type="binding site" evidence="1">
    <location>
        <begin position="96"/>
        <end position="99"/>
    </location>
    <ligand>
        <name>substrate</name>
    </ligand>
</feature>
<feature type="binding site" evidence="1">
    <location>
        <position position="123"/>
    </location>
    <ligand>
        <name>substrate</name>
    </ligand>
</feature>
<reference key="1">
    <citation type="submission" date="2008-05" db="EMBL/GenBank/DDBJ databases">
        <title>Complete sequence of Rhodopseudomonas palustris TIE-1.</title>
        <authorList>
            <consortium name="US DOE Joint Genome Institute"/>
            <person name="Lucas S."/>
            <person name="Copeland A."/>
            <person name="Lapidus A."/>
            <person name="Glavina del Rio T."/>
            <person name="Dalin E."/>
            <person name="Tice H."/>
            <person name="Pitluck S."/>
            <person name="Chain P."/>
            <person name="Malfatti S."/>
            <person name="Shin M."/>
            <person name="Vergez L."/>
            <person name="Lang D."/>
            <person name="Schmutz J."/>
            <person name="Larimer F."/>
            <person name="Land M."/>
            <person name="Hauser L."/>
            <person name="Kyrpides N."/>
            <person name="Mikhailova N."/>
            <person name="Emerson D."/>
            <person name="Newman D.K."/>
            <person name="Roden E."/>
            <person name="Richardson P."/>
        </authorList>
    </citation>
    <scope>NUCLEOTIDE SEQUENCE [LARGE SCALE GENOMIC DNA]</scope>
    <source>
        <strain>TIE-1</strain>
    </source>
</reference>